<gene>
    <name type="primary">DYNLT5</name>
    <name type="synonym">TCTEX1D1</name>
</gene>
<organism>
    <name type="scientific">Homo sapiens</name>
    <name type="common">Human</name>
    <dbReference type="NCBI Taxonomy" id="9606"/>
    <lineage>
        <taxon>Eukaryota</taxon>
        <taxon>Metazoa</taxon>
        <taxon>Chordata</taxon>
        <taxon>Craniata</taxon>
        <taxon>Vertebrata</taxon>
        <taxon>Euteleostomi</taxon>
        <taxon>Mammalia</taxon>
        <taxon>Eutheria</taxon>
        <taxon>Euarchontoglires</taxon>
        <taxon>Primates</taxon>
        <taxon>Haplorrhini</taxon>
        <taxon>Catarrhini</taxon>
        <taxon>Hominidae</taxon>
        <taxon>Homo</taxon>
    </lineage>
</organism>
<proteinExistence type="evidence at protein level"/>
<evidence type="ECO:0000269" key="1">
    <source>
    </source>
</evidence>
<evidence type="ECO:0000269" key="2">
    <source>
    </source>
</evidence>
<evidence type="ECO:0000269" key="3">
    <source>
    </source>
</evidence>
<evidence type="ECO:0000305" key="4"/>
<keyword id="KW-0025">Alternative splicing</keyword>
<keyword id="KW-1267">Proteomics identification</keyword>
<keyword id="KW-1185">Reference proteome</keyword>
<sequence>MMMSDNAKGRAAHSWKKRGSISSLSNHEFWRKEIHGRIKDSMSTVSYMEEPSQRDDISRLTVQMENTYQLGPPKHFPVVTVNHILKDVVTSYLQVEEYEPELCRQMTKTISEVIKAQVKDLMIPRYKLIVIVHIGQLNRQSILIGSRCLWDPKSDTFSSYVFRNSSLFALANVYAVYLE</sequence>
<reference key="1">
    <citation type="journal article" date="2004" name="Nat. Genet.">
        <title>Complete sequencing and characterization of 21,243 full-length human cDNAs.</title>
        <authorList>
            <person name="Ota T."/>
            <person name="Suzuki Y."/>
            <person name="Nishikawa T."/>
            <person name="Otsuki T."/>
            <person name="Sugiyama T."/>
            <person name="Irie R."/>
            <person name="Wakamatsu A."/>
            <person name="Hayashi K."/>
            <person name="Sato H."/>
            <person name="Nagai K."/>
            <person name="Kimura K."/>
            <person name="Makita H."/>
            <person name="Sekine M."/>
            <person name="Obayashi M."/>
            <person name="Nishi T."/>
            <person name="Shibahara T."/>
            <person name="Tanaka T."/>
            <person name="Ishii S."/>
            <person name="Yamamoto J."/>
            <person name="Saito K."/>
            <person name="Kawai Y."/>
            <person name="Isono Y."/>
            <person name="Nakamura Y."/>
            <person name="Nagahari K."/>
            <person name="Murakami K."/>
            <person name="Yasuda T."/>
            <person name="Iwayanagi T."/>
            <person name="Wagatsuma M."/>
            <person name="Shiratori A."/>
            <person name="Sudo H."/>
            <person name="Hosoiri T."/>
            <person name="Kaku Y."/>
            <person name="Kodaira H."/>
            <person name="Kondo H."/>
            <person name="Sugawara M."/>
            <person name="Takahashi M."/>
            <person name="Kanda K."/>
            <person name="Yokoi T."/>
            <person name="Furuya T."/>
            <person name="Kikkawa E."/>
            <person name="Omura Y."/>
            <person name="Abe K."/>
            <person name="Kamihara K."/>
            <person name="Katsuta N."/>
            <person name="Sato K."/>
            <person name="Tanikawa M."/>
            <person name="Yamazaki M."/>
            <person name="Ninomiya K."/>
            <person name="Ishibashi T."/>
            <person name="Yamashita H."/>
            <person name="Murakawa K."/>
            <person name="Fujimori K."/>
            <person name="Tanai H."/>
            <person name="Kimata M."/>
            <person name="Watanabe M."/>
            <person name="Hiraoka S."/>
            <person name="Chiba Y."/>
            <person name="Ishida S."/>
            <person name="Ono Y."/>
            <person name="Takiguchi S."/>
            <person name="Watanabe S."/>
            <person name="Yosida M."/>
            <person name="Hotuta T."/>
            <person name="Kusano J."/>
            <person name="Kanehori K."/>
            <person name="Takahashi-Fujii A."/>
            <person name="Hara H."/>
            <person name="Tanase T.-O."/>
            <person name="Nomura Y."/>
            <person name="Togiya S."/>
            <person name="Komai F."/>
            <person name="Hara R."/>
            <person name="Takeuchi K."/>
            <person name="Arita M."/>
            <person name="Imose N."/>
            <person name="Musashino K."/>
            <person name="Yuuki H."/>
            <person name="Oshima A."/>
            <person name="Sasaki N."/>
            <person name="Aotsuka S."/>
            <person name="Yoshikawa Y."/>
            <person name="Matsunawa H."/>
            <person name="Ichihara T."/>
            <person name="Shiohata N."/>
            <person name="Sano S."/>
            <person name="Moriya S."/>
            <person name="Momiyama H."/>
            <person name="Satoh N."/>
            <person name="Takami S."/>
            <person name="Terashima Y."/>
            <person name="Suzuki O."/>
            <person name="Nakagawa S."/>
            <person name="Senoh A."/>
            <person name="Mizoguchi H."/>
            <person name="Goto Y."/>
            <person name="Shimizu F."/>
            <person name="Wakebe H."/>
            <person name="Hishigaki H."/>
            <person name="Watanabe T."/>
            <person name="Sugiyama A."/>
            <person name="Takemoto M."/>
            <person name="Kawakami B."/>
            <person name="Yamazaki M."/>
            <person name="Watanabe K."/>
            <person name="Kumagai A."/>
            <person name="Itakura S."/>
            <person name="Fukuzumi Y."/>
            <person name="Fujimori Y."/>
            <person name="Komiyama M."/>
            <person name="Tashiro H."/>
            <person name="Tanigami A."/>
            <person name="Fujiwara T."/>
            <person name="Ono T."/>
            <person name="Yamada K."/>
            <person name="Fujii Y."/>
            <person name="Ozaki K."/>
            <person name="Hirao M."/>
            <person name="Ohmori Y."/>
            <person name="Kawabata A."/>
            <person name="Hikiji T."/>
            <person name="Kobatake N."/>
            <person name="Inagaki H."/>
            <person name="Ikema Y."/>
            <person name="Okamoto S."/>
            <person name="Okitani R."/>
            <person name="Kawakami T."/>
            <person name="Noguchi S."/>
            <person name="Itoh T."/>
            <person name="Shigeta K."/>
            <person name="Senba T."/>
            <person name="Matsumura K."/>
            <person name="Nakajima Y."/>
            <person name="Mizuno T."/>
            <person name="Morinaga M."/>
            <person name="Sasaki M."/>
            <person name="Togashi T."/>
            <person name="Oyama M."/>
            <person name="Hata H."/>
            <person name="Watanabe M."/>
            <person name="Komatsu T."/>
            <person name="Mizushima-Sugano J."/>
            <person name="Satoh T."/>
            <person name="Shirai Y."/>
            <person name="Takahashi Y."/>
            <person name="Nakagawa K."/>
            <person name="Okumura K."/>
            <person name="Nagase T."/>
            <person name="Nomura N."/>
            <person name="Kikuchi H."/>
            <person name="Masuho Y."/>
            <person name="Yamashita R."/>
            <person name="Nakai K."/>
            <person name="Yada T."/>
            <person name="Nakamura Y."/>
            <person name="Ohara O."/>
            <person name="Isogai T."/>
            <person name="Sugano S."/>
        </authorList>
    </citation>
    <scope>NUCLEOTIDE SEQUENCE [LARGE SCALE MRNA]</scope>
</reference>
<reference key="2">
    <citation type="journal article" date="2006" name="Nature">
        <title>The DNA sequence and biological annotation of human chromosome 1.</title>
        <authorList>
            <person name="Gregory S.G."/>
            <person name="Barlow K.F."/>
            <person name="McLay K.E."/>
            <person name="Kaul R."/>
            <person name="Swarbreck D."/>
            <person name="Dunham A."/>
            <person name="Scott C.E."/>
            <person name="Howe K.L."/>
            <person name="Woodfine K."/>
            <person name="Spencer C.C.A."/>
            <person name="Jones M.C."/>
            <person name="Gillson C."/>
            <person name="Searle S."/>
            <person name="Zhou Y."/>
            <person name="Kokocinski F."/>
            <person name="McDonald L."/>
            <person name="Evans R."/>
            <person name="Phillips K."/>
            <person name="Atkinson A."/>
            <person name="Cooper R."/>
            <person name="Jones C."/>
            <person name="Hall R.E."/>
            <person name="Andrews T.D."/>
            <person name="Lloyd C."/>
            <person name="Ainscough R."/>
            <person name="Almeida J.P."/>
            <person name="Ambrose K.D."/>
            <person name="Anderson F."/>
            <person name="Andrew R.W."/>
            <person name="Ashwell R.I.S."/>
            <person name="Aubin K."/>
            <person name="Babbage A.K."/>
            <person name="Bagguley C.L."/>
            <person name="Bailey J."/>
            <person name="Beasley H."/>
            <person name="Bethel G."/>
            <person name="Bird C.P."/>
            <person name="Bray-Allen S."/>
            <person name="Brown J.Y."/>
            <person name="Brown A.J."/>
            <person name="Buckley D."/>
            <person name="Burton J."/>
            <person name="Bye J."/>
            <person name="Carder C."/>
            <person name="Chapman J.C."/>
            <person name="Clark S.Y."/>
            <person name="Clarke G."/>
            <person name="Clee C."/>
            <person name="Cobley V."/>
            <person name="Collier R.E."/>
            <person name="Corby N."/>
            <person name="Coville G.J."/>
            <person name="Davies J."/>
            <person name="Deadman R."/>
            <person name="Dunn M."/>
            <person name="Earthrowl M."/>
            <person name="Ellington A.G."/>
            <person name="Errington H."/>
            <person name="Frankish A."/>
            <person name="Frankland J."/>
            <person name="French L."/>
            <person name="Garner P."/>
            <person name="Garnett J."/>
            <person name="Gay L."/>
            <person name="Ghori M.R.J."/>
            <person name="Gibson R."/>
            <person name="Gilby L.M."/>
            <person name="Gillett W."/>
            <person name="Glithero R.J."/>
            <person name="Grafham D.V."/>
            <person name="Griffiths C."/>
            <person name="Griffiths-Jones S."/>
            <person name="Grocock R."/>
            <person name="Hammond S."/>
            <person name="Harrison E.S.I."/>
            <person name="Hart E."/>
            <person name="Haugen E."/>
            <person name="Heath P.D."/>
            <person name="Holmes S."/>
            <person name="Holt K."/>
            <person name="Howden P.J."/>
            <person name="Hunt A.R."/>
            <person name="Hunt S.E."/>
            <person name="Hunter G."/>
            <person name="Isherwood J."/>
            <person name="James R."/>
            <person name="Johnson C."/>
            <person name="Johnson D."/>
            <person name="Joy A."/>
            <person name="Kay M."/>
            <person name="Kershaw J.K."/>
            <person name="Kibukawa M."/>
            <person name="Kimberley A.M."/>
            <person name="King A."/>
            <person name="Knights A.J."/>
            <person name="Lad H."/>
            <person name="Laird G."/>
            <person name="Lawlor S."/>
            <person name="Leongamornlert D.A."/>
            <person name="Lloyd D.M."/>
            <person name="Loveland J."/>
            <person name="Lovell J."/>
            <person name="Lush M.J."/>
            <person name="Lyne R."/>
            <person name="Martin S."/>
            <person name="Mashreghi-Mohammadi M."/>
            <person name="Matthews L."/>
            <person name="Matthews N.S.W."/>
            <person name="McLaren S."/>
            <person name="Milne S."/>
            <person name="Mistry S."/>
            <person name="Moore M.J.F."/>
            <person name="Nickerson T."/>
            <person name="O'Dell C.N."/>
            <person name="Oliver K."/>
            <person name="Palmeiri A."/>
            <person name="Palmer S.A."/>
            <person name="Parker A."/>
            <person name="Patel D."/>
            <person name="Pearce A.V."/>
            <person name="Peck A.I."/>
            <person name="Pelan S."/>
            <person name="Phelps K."/>
            <person name="Phillimore B.J."/>
            <person name="Plumb R."/>
            <person name="Rajan J."/>
            <person name="Raymond C."/>
            <person name="Rouse G."/>
            <person name="Saenphimmachak C."/>
            <person name="Sehra H.K."/>
            <person name="Sheridan E."/>
            <person name="Shownkeen R."/>
            <person name="Sims S."/>
            <person name="Skuce C.D."/>
            <person name="Smith M."/>
            <person name="Steward C."/>
            <person name="Subramanian S."/>
            <person name="Sycamore N."/>
            <person name="Tracey A."/>
            <person name="Tromans A."/>
            <person name="Van Helmond Z."/>
            <person name="Wall M."/>
            <person name="Wallis J.M."/>
            <person name="White S."/>
            <person name="Whitehead S.L."/>
            <person name="Wilkinson J.E."/>
            <person name="Willey D.L."/>
            <person name="Williams H."/>
            <person name="Wilming L."/>
            <person name="Wray P.W."/>
            <person name="Wu Z."/>
            <person name="Coulson A."/>
            <person name="Vaudin M."/>
            <person name="Sulston J.E."/>
            <person name="Durbin R.M."/>
            <person name="Hubbard T."/>
            <person name="Wooster R."/>
            <person name="Dunham I."/>
            <person name="Carter N.P."/>
            <person name="McVean G."/>
            <person name="Ross M.T."/>
            <person name="Harrow J."/>
            <person name="Olson M.V."/>
            <person name="Beck S."/>
            <person name="Rogers J."/>
            <person name="Bentley D.R."/>
        </authorList>
    </citation>
    <scope>NUCLEOTIDE SEQUENCE [LARGE SCALE GENOMIC DNA]</scope>
</reference>
<reference key="3">
    <citation type="journal article" date="2004" name="Genome Res.">
        <title>The status, quality, and expansion of the NIH full-length cDNA project: the Mammalian Gene Collection (MGC).</title>
        <authorList>
            <consortium name="The MGC Project Team"/>
        </authorList>
    </citation>
    <scope>NUCLEOTIDE SEQUENCE [LARGE SCALE MRNA]</scope>
    <scope>VARIANT ILE-143</scope>
</reference>
<reference key="4">
    <citation type="submission" date="2006-02" db="EMBL/GenBank/DDBJ databases">
        <title>SNPSplicer -- systematic analysis of genotype-dependent splicing in genotyped cDNAs.</title>
        <authorList>
            <person name="Elsharawy A."/>
            <person name="Manaster C."/>
            <person name="Teuber M."/>
            <person name="Rosenstiel P."/>
            <person name="Kwiatkowski R."/>
            <person name="Huse K."/>
            <person name="Platzer M."/>
            <person name="Becker A."/>
            <person name="Nurnberg P."/>
            <person name="Schreiber S."/>
            <person name="Hampe J."/>
        </authorList>
    </citation>
    <scope>NUCLEOTIDE SEQUENCE [GENOMIC DNA] OF 26-142</scope>
</reference>
<reference key="5">
    <citation type="journal article" date="2018" name="PLoS Genet.">
        <title>ZMYND10 stabilizes intermediate chain proteins in the cytoplasmic pre-assembly of dynein arms.</title>
        <authorList>
            <person name="Cho K.J."/>
            <person name="Noh S.H."/>
            <person name="Han S.M."/>
            <person name="Choi W.I."/>
            <person name="Kim H.Y."/>
            <person name="Yu S."/>
            <person name="Lee J.S."/>
            <person name="Rim J.H."/>
            <person name="Lee M.G."/>
            <person name="Hildebrandt F."/>
            <person name="Gee H.Y."/>
        </authorList>
    </citation>
    <scope>INTERACTION WITH ZMYND10</scope>
</reference>
<reference key="6">
    <citation type="journal article" date="2020" name="Eur. J. Hum. Genet.">
        <title>TCTEX1D1 is a genetic modifier of disease progression in Duchenne muscular dystrophy.</title>
        <authorList>
            <consortium name="CINRG Investigators"/>
            <person name="Spitali P."/>
            <person name="Zaharieva I."/>
            <person name="Bohringer S."/>
            <person name="Hiller M."/>
            <person name="Chaouch A."/>
            <person name="Roos A."/>
            <person name="Scotton C."/>
            <person name="Claustres M."/>
            <person name="Bello L."/>
            <person name="McDonald C.M."/>
            <person name="Hoffman E.P."/>
            <person name="Koeks Z."/>
            <person name="Eka Suchiman H."/>
            <person name="Cirak S."/>
            <person name="Scoto M."/>
            <person name="Reza M."/>
            <person name="'t Hoen P.A.C."/>
            <person name="Niks E.H."/>
            <person name="Tuffery-Giraud S."/>
            <person name="Lochmueller H."/>
            <person name="Ferlini A."/>
            <person name="Muntoni F."/>
            <person name="Aartsma-Rus A."/>
        </authorList>
    </citation>
    <scope>VARIANT ASP-49</scope>
</reference>
<dbReference type="EMBL" id="AK098192">
    <property type="protein sequence ID" value="BAC05257.1"/>
    <property type="molecule type" value="mRNA"/>
</dbReference>
<dbReference type="EMBL" id="AL354978">
    <property type="status" value="NOT_ANNOTATED_CDS"/>
    <property type="molecule type" value="Genomic_DNA"/>
</dbReference>
<dbReference type="EMBL" id="BC106885">
    <property type="protein sequence ID" value="AAI06886.1"/>
    <property type="molecule type" value="mRNA"/>
</dbReference>
<dbReference type="EMBL" id="DQ411321">
    <property type="protein sequence ID" value="ABD63924.1"/>
    <property type="molecule type" value="Genomic_DNA"/>
</dbReference>
<dbReference type="CCDS" id="CCDS633.1">
    <molecule id="Q8N7M0-1"/>
</dbReference>
<dbReference type="RefSeq" id="NP_689878.2">
    <molecule id="Q8N7M0-1"/>
    <property type="nucleotide sequence ID" value="NM_152665.3"/>
</dbReference>
<dbReference type="RefSeq" id="XP_016856055.1">
    <property type="nucleotide sequence ID" value="XM_017000566.1"/>
</dbReference>
<dbReference type="SMR" id="Q8N7M0"/>
<dbReference type="BioGRID" id="128300">
    <property type="interactions" value="9"/>
</dbReference>
<dbReference type="FunCoup" id="Q8N7M0">
    <property type="interactions" value="20"/>
</dbReference>
<dbReference type="IntAct" id="Q8N7M0">
    <property type="interactions" value="7"/>
</dbReference>
<dbReference type="STRING" id="9606.ENSP00000282670"/>
<dbReference type="iPTMnet" id="Q8N7M0"/>
<dbReference type="PhosphoSitePlus" id="Q8N7M0"/>
<dbReference type="BioMuta" id="TCTEX1D1"/>
<dbReference type="DMDM" id="146325745"/>
<dbReference type="MassIVE" id="Q8N7M0"/>
<dbReference type="PaxDb" id="9606-ENSP00000282670"/>
<dbReference type="PeptideAtlas" id="Q8N7M0"/>
<dbReference type="Antibodypedia" id="33388">
    <property type="antibodies" value="40 antibodies from 19 providers"/>
</dbReference>
<dbReference type="DNASU" id="200132"/>
<dbReference type="Ensembl" id="ENST00000282670.7">
    <molecule id="Q8N7M0-1"/>
    <property type="protein sequence ID" value="ENSP00000282670.2"/>
    <property type="gene ID" value="ENSG00000152760.10"/>
</dbReference>
<dbReference type="GeneID" id="200132"/>
<dbReference type="KEGG" id="hsa:200132"/>
<dbReference type="MANE-Select" id="ENST00000282670.7">
    <property type="protein sequence ID" value="ENSP00000282670.2"/>
    <property type="RefSeq nucleotide sequence ID" value="NM_152665.3"/>
    <property type="RefSeq protein sequence ID" value="NP_689878.2"/>
</dbReference>
<dbReference type="UCSC" id="uc001dcv.4">
    <molecule id="Q8N7M0-1"/>
    <property type="organism name" value="human"/>
</dbReference>
<dbReference type="AGR" id="HGNC:26882"/>
<dbReference type="CTD" id="200132"/>
<dbReference type="DisGeNET" id="200132"/>
<dbReference type="GeneCards" id="DYNLT5"/>
<dbReference type="HGNC" id="HGNC:26882">
    <property type="gene designation" value="DYNLT5"/>
</dbReference>
<dbReference type="HPA" id="ENSG00000152760">
    <property type="expression patterns" value="Tissue enhanced (brain, choroid plexus, fallopian tube)"/>
</dbReference>
<dbReference type="MIM" id="619994">
    <property type="type" value="gene"/>
</dbReference>
<dbReference type="neXtProt" id="NX_Q8N7M0"/>
<dbReference type="OpenTargets" id="ENSG00000152760"/>
<dbReference type="VEuPathDB" id="HostDB:ENSG00000152760"/>
<dbReference type="eggNOG" id="KOG4108">
    <property type="taxonomic scope" value="Eukaryota"/>
</dbReference>
<dbReference type="GeneTree" id="ENSGT00940000160185"/>
<dbReference type="HOGENOM" id="CLU_097204_4_0_1"/>
<dbReference type="InParanoid" id="Q8N7M0"/>
<dbReference type="OMA" id="CRQMAKT"/>
<dbReference type="OrthoDB" id="10248487at2759"/>
<dbReference type="PAN-GO" id="Q8N7M0">
    <property type="GO annotations" value="4 GO annotations based on evolutionary models"/>
</dbReference>
<dbReference type="PhylomeDB" id="Q8N7M0"/>
<dbReference type="TreeFam" id="TF313904"/>
<dbReference type="PathwayCommons" id="Q8N7M0"/>
<dbReference type="Reactome" id="R-HSA-5620924">
    <property type="pathway name" value="Intraflagellar transport"/>
</dbReference>
<dbReference type="SignaLink" id="Q8N7M0"/>
<dbReference type="BioGRID-ORCS" id="200132">
    <property type="hits" value="14 hits in 1137 CRISPR screens"/>
</dbReference>
<dbReference type="GenomeRNAi" id="200132"/>
<dbReference type="Pharos" id="Q8N7M0">
    <property type="development level" value="Tdark"/>
</dbReference>
<dbReference type="PRO" id="PR:Q8N7M0"/>
<dbReference type="Proteomes" id="UP000005640">
    <property type="component" value="Chromosome 1"/>
</dbReference>
<dbReference type="RNAct" id="Q8N7M0">
    <property type="molecule type" value="protein"/>
</dbReference>
<dbReference type="Bgee" id="ENSG00000152760">
    <property type="expression patterns" value="Expressed in right uterine tube and 116 other cell types or tissues"/>
</dbReference>
<dbReference type="ExpressionAtlas" id="Q8N7M0">
    <property type="expression patterns" value="baseline and differential"/>
</dbReference>
<dbReference type="GO" id="GO:0005737">
    <property type="term" value="C:cytoplasm"/>
    <property type="evidence" value="ECO:0000318"/>
    <property type="project" value="GO_Central"/>
</dbReference>
<dbReference type="GO" id="GO:0005868">
    <property type="term" value="C:cytoplasmic dynein complex"/>
    <property type="evidence" value="ECO:0000318"/>
    <property type="project" value="GO_Central"/>
</dbReference>
<dbReference type="GO" id="GO:0045505">
    <property type="term" value="F:dynein intermediate chain binding"/>
    <property type="evidence" value="ECO:0000318"/>
    <property type="project" value="GO_Central"/>
</dbReference>
<dbReference type="GO" id="GO:0007018">
    <property type="term" value="P:microtubule-based movement"/>
    <property type="evidence" value="ECO:0000318"/>
    <property type="project" value="GO_Central"/>
</dbReference>
<dbReference type="CDD" id="cd21458">
    <property type="entry name" value="DLC-like_TCTEX1D1"/>
    <property type="match status" value="1"/>
</dbReference>
<dbReference type="Gene3D" id="3.30.1140.40">
    <property type="entry name" value="Tctex-1"/>
    <property type="match status" value="1"/>
</dbReference>
<dbReference type="InterPro" id="IPR005334">
    <property type="entry name" value="Tctex-1-like"/>
</dbReference>
<dbReference type="InterPro" id="IPR038586">
    <property type="entry name" value="Tctex-1-like_sf"/>
</dbReference>
<dbReference type="PANTHER" id="PTHR21255:SF64">
    <property type="entry name" value="DYNEIN LIGHT CHAIN TCTEX-TYPE 5"/>
    <property type="match status" value="1"/>
</dbReference>
<dbReference type="PANTHER" id="PTHR21255">
    <property type="entry name" value="T-COMPLEX-ASSOCIATED-TESTIS-EXPRESSED 1/ DYNEIN LIGHT CHAIN"/>
    <property type="match status" value="1"/>
</dbReference>
<dbReference type="Pfam" id="PF03645">
    <property type="entry name" value="Tctex-1"/>
    <property type="match status" value="1"/>
</dbReference>
<comment type="subunit">
    <text evidence="2">Interacts with ZMYND10.</text>
</comment>
<comment type="interaction">
    <interactant intactId="EBI-10267606">
        <id>Q8N7M0</id>
    </interactant>
    <interactant intactId="EBI-748397">
        <id>P50222</id>
        <label>MEOX2</label>
    </interactant>
    <organismsDiffer>false</organismsDiffer>
    <experiments>3</experiments>
</comment>
<comment type="alternative products">
    <event type="alternative splicing"/>
    <isoform>
        <id>Q8N7M0-1</id>
        <name>1</name>
        <sequence type="displayed"/>
    </isoform>
    <isoform>
        <id>Q8N7M0-2</id>
        <name>2</name>
        <sequence type="not described"/>
    </isoform>
</comment>
<comment type="similarity">
    <text evidence="4">Belongs to the dynein light chain Tctex-type family.</text>
</comment>
<name>DYLT5_HUMAN</name>
<protein>
    <recommendedName>
        <fullName>Dynein light chain Tctex-type 5</fullName>
    </recommendedName>
    <alternativeName>
        <fullName>Tctex1 domain-containing protein 1</fullName>
    </alternativeName>
</protein>
<feature type="chain" id="PRO_0000284885" description="Dynein light chain Tctex-type 5">
    <location>
        <begin position="1"/>
        <end position="179"/>
    </location>
</feature>
<feature type="sequence variant" id="VAR_031852" description="May act as disease modifier for Duchenne muscular dystrophy being associated with earlier loss of ambulation; dbSNP:rs1060575." evidence="3">
    <original>E</original>
    <variation>D</variation>
    <location>
        <position position="49"/>
    </location>
</feature>
<feature type="sequence variant" id="VAR_055700" description="In dbSNP:rs2133173." evidence="1">
    <original>L</original>
    <variation>I</variation>
    <location>
        <position position="143"/>
    </location>
</feature>
<accession>Q8N7M0</accession>
<accession>Q06YR9</accession>
<accession>Q5VYE1</accession>